<gene>
    <name evidence="2" type="primary">bsaP</name>
    <name evidence="5" type="ordered locus">MSMEG_3195</name>
    <name evidence="6" type="ordered locus">MSMEI_3113</name>
</gene>
<reference evidence="5" key="1">
    <citation type="submission" date="2006-10" db="EMBL/GenBank/DDBJ databases">
        <authorList>
            <person name="Fleischmann R.D."/>
            <person name="Dodson R.J."/>
            <person name="Haft D.H."/>
            <person name="Merkel J.S."/>
            <person name="Nelson W.C."/>
            <person name="Fraser C.M."/>
        </authorList>
    </citation>
    <scope>NUCLEOTIDE SEQUENCE [LARGE SCALE GENOMIC DNA]</scope>
    <source>
        <strain>ATCC 700084 / mc(2)155</strain>
    </source>
</reference>
<reference evidence="6" key="2">
    <citation type="journal article" date="2007" name="Genome Biol.">
        <title>Interrupted coding sequences in Mycobacterium smegmatis: authentic mutations or sequencing errors?</title>
        <authorList>
            <person name="Deshayes C."/>
            <person name="Perrodou E."/>
            <person name="Gallien S."/>
            <person name="Euphrasie D."/>
            <person name="Schaeffer C."/>
            <person name="Van-Dorsselaer A."/>
            <person name="Poch O."/>
            <person name="Lecompte O."/>
            <person name="Reyrat J.-M."/>
        </authorList>
    </citation>
    <scope>NUCLEOTIDE SEQUENCE [LARGE SCALE GENOMIC DNA]</scope>
    <source>
        <strain>ATCC 700084 / mc(2)155</strain>
    </source>
</reference>
<reference evidence="6" key="3">
    <citation type="journal article" date="2009" name="Genome Res.">
        <title>Ortho-proteogenomics: multiple proteomes investigation through orthology and a new MS-based protocol.</title>
        <authorList>
            <person name="Gallien S."/>
            <person name="Perrodou E."/>
            <person name="Carapito C."/>
            <person name="Deshayes C."/>
            <person name="Reyrat J.-M."/>
            <person name="Van Dorsselaer A."/>
            <person name="Poch O."/>
            <person name="Schaeffer C."/>
            <person name="Lecompte O."/>
        </authorList>
    </citation>
    <scope>NUCLEOTIDE SEQUENCE [LARGE SCALE GENOMIC DNA]</scope>
    <source>
        <strain>ATCC 700084 / mc(2)155</strain>
    </source>
</reference>
<reference key="4">
    <citation type="journal article" date="2024" name="Nat. Commun.">
        <title>Mycobacterial biotin synthases require an auxiliary protein to convert dethiobiotin into biotin.</title>
        <authorList>
            <person name="Qu D."/>
            <person name="Ge P."/>
            <person name="Botella L."/>
            <person name="Park S.W."/>
            <person name="Lee H.N."/>
            <person name="Thornton N."/>
            <person name="Bean J.M."/>
            <person name="Krieger I.V."/>
            <person name="Sacchettini J.C."/>
            <person name="Ehrt S."/>
            <person name="Aldrich C.C."/>
            <person name="Schnappinger D."/>
        </authorList>
    </citation>
    <scope>FUNCTION</scope>
    <scope>COFACTOR</scope>
    <scope>DISRUPTION PHENOTYPE</scope>
    <source>
        <strain>ATCC 700084 / mc(2)155</strain>
    </source>
</reference>
<name>BSAP_MYCS2</name>
<organism>
    <name type="scientific">Mycolicibacterium smegmatis (strain ATCC 700084 / mc(2)155)</name>
    <name type="common">Mycobacterium smegmatis</name>
    <dbReference type="NCBI Taxonomy" id="246196"/>
    <lineage>
        <taxon>Bacteria</taxon>
        <taxon>Bacillati</taxon>
        <taxon>Actinomycetota</taxon>
        <taxon>Actinomycetes</taxon>
        <taxon>Mycobacteriales</taxon>
        <taxon>Mycobacteriaceae</taxon>
        <taxon>Mycolicibacterium</taxon>
    </lineage>
</organism>
<evidence type="ECO:0000269" key="1">
    <source>
    </source>
</evidence>
<evidence type="ECO:0000303" key="2">
    <source>
    </source>
</evidence>
<evidence type="ECO:0000305" key="3"/>
<evidence type="ECO:0000305" key="4">
    <source>
    </source>
</evidence>
<evidence type="ECO:0000312" key="5">
    <source>
        <dbReference type="EMBL" id="ABK73019.1"/>
    </source>
</evidence>
<evidence type="ECO:0000312" key="6">
    <source>
        <dbReference type="EMBL" id="AFP39577.1"/>
    </source>
</evidence>
<sequence>MIEETPALPAPVGAGVYNVYTGGPADSALPTAAQLGLEPPRFCAECGRRMIVQVRPDGWWAQCSRHGHVDSTDLDPRR</sequence>
<accession>A0QX71</accession>
<accession>I7G1E6</accession>
<comment type="function">
    <text evidence="1">Required for the activity of the biotin synthase BioB.</text>
</comment>
<comment type="cofactor">
    <cofactor evidence="4">
        <name>iron-sulfur cluster</name>
        <dbReference type="ChEBI" id="CHEBI:30408"/>
    </cofactor>
    <text evidence="1">Probably contains an unusual Fe-S cluster.</text>
</comment>
<comment type="disruption phenotype">
    <text evidence="1">The deletion mutant is unable to grow without extrabacterial biotin (PubMed:38755122). The growth defect of the deletion mutant in biotin-free media can be complemented with biotin but not with another intermediate of the biotin synthesis pathway (PubMed:38755122).</text>
</comment>
<comment type="similarity">
    <text evidence="3">Belongs to the BsaP family.</text>
</comment>
<comment type="sequence caution" evidence="3">
    <conflict type="erroneous initiation">
        <sequence resource="EMBL-CDS" id="ABK73019"/>
    </conflict>
    <text>Extended N-terminus.</text>
</comment>
<keyword id="KW-0093">Biotin biosynthesis</keyword>
<keyword id="KW-0408">Iron</keyword>
<keyword id="KW-0411">Iron-sulfur</keyword>
<keyword id="KW-0479">Metal-binding</keyword>
<keyword id="KW-1185">Reference proteome</keyword>
<protein>
    <recommendedName>
        <fullName evidence="2">Biotin synthase auxiliary protein</fullName>
    </recommendedName>
</protein>
<dbReference type="EMBL" id="CP000480">
    <property type="protein sequence ID" value="ABK73019.1"/>
    <property type="status" value="ALT_INIT"/>
    <property type="molecule type" value="Genomic_DNA"/>
</dbReference>
<dbReference type="EMBL" id="CP001663">
    <property type="protein sequence ID" value="AFP39577.1"/>
    <property type="molecule type" value="Genomic_DNA"/>
</dbReference>
<dbReference type="RefSeq" id="WP_014877604.1">
    <property type="nucleotide sequence ID" value="NZ_SIJM01000015.1"/>
</dbReference>
<dbReference type="RefSeq" id="YP_887509.1">
    <property type="nucleotide sequence ID" value="NC_008596.1"/>
</dbReference>
<dbReference type="STRING" id="246196.MSMEG_3195"/>
<dbReference type="PaxDb" id="246196-MSMEI_3113"/>
<dbReference type="KEGG" id="msb:LJ00_15885"/>
<dbReference type="KEGG" id="msg:MSMEI_3113"/>
<dbReference type="KEGG" id="msm:MSMEG_3195"/>
<dbReference type="PATRIC" id="fig|246196.19.peg.3157"/>
<dbReference type="eggNOG" id="ENOG5033ASY">
    <property type="taxonomic scope" value="Bacteria"/>
</dbReference>
<dbReference type="OrthoDB" id="3829284at2"/>
<dbReference type="Proteomes" id="UP000000757">
    <property type="component" value="Chromosome"/>
</dbReference>
<dbReference type="Proteomes" id="UP000006158">
    <property type="component" value="Chromosome"/>
</dbReference>
<dbReference type="GO" id="GO:0051536">
    <property type="term" value="F:iron-sulfur cluster binding"/>
    <property type="evidence" value="ECO:0007669"/>
    <property type="project" value="UniProtKB-KW"/>
</dbReference>
<dbReference type="GO" id="GO:0046872">
    <property type="term" value="F:metal ion binding"/>
    <property type="evidence" value="ECO:0007669"/>
    <property type="project" value="UniProtKB-KW"/>
</dbReference>
<dbReference type="GO" id="GO:0009102">
    <property type="term" value="P:biotin biosynthetic process"/>
    <property type="evidence" value="ECO:0007669"/>
    <property type="project" value="UniProtKB-KW"/>
</dbReference>
<proteinExistence type="inferred from homology"/>
<feature type="chain" id="PRO_0000461135" description="Biotin synthase auxiliary protein">
    <location>
        <begin position="1"/>
        <end position="78"/>
    </location>
</feature>